<gene>
    <name type="primary">TTC38</name>
</gene>
<accession>Q5R3I4</accession>
<accession>Q8WV27</accession>
<accession>Q9NWP8</accession>
<name>TTC38_HUMAN</name>
<comment type="interaction">
    <interactant intactId="EBI-7289489">
        <id>Q5R3I4</id>
    </interactant>
    <interactant intactId="EBI-11054756">
        <id>Q99985</id>
        <label>SEMA3C</label>
    </interactant>
    <organismsDiffer>false</organismsDiffer>
    <experiments>2</experiments>
</comment>
<comment type="similarity">
    <text evidence="4">Belongs to the TTC38 family.</text>
</comment>
<comment type="sequence caution" evidence="4">
    <conflict type="frameshift">
        <sequence resource="EMBL-CDS" id="BAA91331"/>
    </conflict>
</comment>
<dbReference type="EMBL" id="AK000706">
    <property type="protein sequence ID" value="BAA91331.1"/>
    <property type="status" value="ALT_FRAME"/>
    <property type="molecule type" value="mRNA"/>
</dbReference>
<dbReference type="EMBL" id="Z93024">
    <property type="status" value="NOT_ANNOTATED_CDS"/>
    <property type="molecule type" value="Genomic_DNA"/>
</dbReference>
<dbReference type="EMBL" id="CH471138">
    <property type="protein sequence ID" value="EAW73414.1"/>
    <property type="molecule type" value="Genomic_DNA"/>
</dbReference>
<dbReference type="EMBL" id="BC018918">
    <property type="protein sequence ID" value="AAH18918.2"/>
    <property type="molecule type" value="mRNA"/>
</dbReference>
<dbReference type="CCDS" id="CCDS43030.1"/>
<dbReference type="RefSeq" id="NP_060401.3">
    <property type="nucleotide sequence ID" value="NM_017931.4"/>
</dbReference>
<dbReference type="SMR" id="Q5R3I4"/>
<dbReference type="BioGRID" id="120351">
    <property type="interactions" value="21"/>
</dbReference>
<dbReference type="FunCoup" id="Q5R3I4">
    <property type="interactions" value="252"/>
</dbReference>
<dbReference type="IntAct" id="Q5R3I4">
    <property type="interactions" value="11"/>
</dbReference>
<dbReference type="MINT" id="Q5R3I4"/>
<dbReference type="STRING" id="9606.ENSP00000370419"/>
<dbReference type="GlyGen" id="Q5R3I4">
    <property type="glycosylation" value="1 site, 1 O-linked glycan (1 site)"/>
</dbReference>
<dbReference type="iPTMnet" id="Q5R3I4"/>
<dbReference type="PhosphoSitePlus" id="Q5R3I4"/>
<dbReference type="BioMuta" id="TTC38"/>
<dbReference type="DMDM" id="74755898"/>
<dbReference type="jPOST" id="Q5R3I4"/>
<dbReference type="MassIVE" id="Q5R3I4"/>
<dbReference type="PaxDb" id="9606-ENSP00000370419"/>
<dbReference type="PeptideAtlas" id="Q5R3I4"/>
<dbReference type="ProteomicsDB" id="63726"/>
<dbReference type="Pumba" id="Q5R3I4"/>
<dbReference type="Antibodypedia" id="28031">
    <property type="antibodies" value="46 antibodies from 14 providers"/>
</dbReference>
<dbReference type="DNASU" id="55020"/>
<dbReference type="Ensembl" id="ENST00000381031.8">
    <property type="protein sequence ID" value="ENSP00000370419.3"/>
    <property type="gene ID" value="ENSG00000075234.17"/>
</dbReference>
<dbReference type="GeneID" id="55020"/>
<dbReference type="KEGG" id="hsa:55020"/>
<dbReference type="MANE-Select" id="ENST00000381031.8">
    <property type="protein sequence ID" value="ENSP00000370419.3"/>
    <property type="RefSeq nucleotide sequence ID" value="NM_017931.4"/>
    <property type="RefSeq protein sequence ID" value="NP_060401.3"/>
</dbReference>
<dbReference type="UCSC" id="uc003bhi.3">
    <property type="organism name" value="human"/>
</dbReference>
<dbReference type="AGR" id="HGNC:26082"/>
<dbReference type="CTD" id="55020"/>
<dbReference type="DisGeNET" id="55020"/>
<dbReference type="GeneCards" id="TTC38"/>
<dbReference type="HGNC" id="HGNC:26082">
    <property type="gene designation" value="TTC38"/>
</dbReference>
<dbReference type="HPA" id="ENSG00000075234">
    <property type="expression patterns" value="Tissue enhanced (liver)"/>
</dbReference>
<dbReference type="neXtProt" id="NX_Q5R3I4"/>
<dbReference type="OpenTargets" id="ENSG00000075234"/>
<dbReference type="PharmGKB" id="PA162407227"/>
<dbReference type="VEuPathDB" id="HostDB:ENSG00000075234"/>
<dbReference type="eggNOG" id="KOG2610">
    <property type="taxonomic scope" value="Eukaryota"/>
</dbReference>
<dbReference type="GeneTree" id="ENSGT00390000002669"/>
<dbReference type="HOGENOM" id="CLU_029972_1_2_1"/>
<dbReference type="InParanoid" id="Q5R3I4"/>
<dbReference type="OMA" id="YAFNDVH"/>
<dbReference type="OrthoDB" id="1427555at2759"/>
<dbReference type="PAN-GO" id="Q5R3I4">
    <property type="GO annotations" value="0 GO annotations based on evolutionary models"/>
</dbReference>
<dbReference type="PhylomeDB" id="Q5R3I4"/>
<dbReference type="TreeFam" id="TF313343"/>
<dbReference type="PathwayCommons" id="Q5R3I4"/>
<dbReference type="SignaLink" id="Q5R3I4"/>
<dbReference type="BioGRID-ORCS" id="55020">
    <property type="hits" value="7 hits in 1154 CRISPR screens"/>
</dbReference>
<dbReference type="ChiTaRS" id="TTC38">
    <property type="organism name" value="human"/>
</dbReference>
<dbReference type="GenomeRNAi" id="55020"/>
<dbReference type="Pharos" id="Q5R3I4">
    <property type="development level" value="Tdark"/>
</dbReference>
<dbReference type="PRO" id="PR:Q5R3I4"/>
<dbReference type="Proteomes" id="UP000005640">
    <property type="component" value="Chromosome 22"/>
</dbReference>
<dbReference type="RNAct" id="Q5R3I4">
    <property type="molecule type" value="protein"/>
</dbReference>
<dbReference type="Bgee" id="ENSG00000075234">
    <property type="expression patterns" value="Expressed in right lobe of liver and 127 other cell types or tissues"/>
</dbReference>
<dbReference type="ExpressionAtlas" id="Q5R3I4">
    <property type="expression patterns" value="baseline and differential"/>
</dbReference>
<dbReference type="GO" id="GO:0070062">
    <property type="term" value="C:extracellular exosome"/>
    <property type="evidence" value="ECO:0007005"/>
    <property type="project" value="UniProtKB"/>
</dbReference>
<dbReference type="CDD" id="cd05804">
    <property type="entry name" value="StaR_like"/>
    <property type="match status" value="1"/>
</dbReference>
<dbReference type="FunFam" id="1.25.40.10:FF:000311">
    <property type="entry name" value="Tetratricopeptide repeat domain 38"/>
    <property type="match status" value="1"/>
</dbReference>
<dbReference type="Gene3D" id="1.25.40.10">
    <property type="entry name" value="Tetratricopeptide repeat domain"/>
    <property type="match status" value="1"/>
</dbReference>
<dbReference type="InterPro" id="IPR011990">
    <property type="entry name" value="TPR-like_helical_dom_sf"/>
</dbReference>
<dbReference type="InterPro" id="IPR033891">
    <property type="entry name" value="TTC38"/>
</dbReference>
<dbReference type="PANTHER" id="PTHR16263">
    <property type="entry name" value="TETRATRICOPEPTIDE REPEAT PROTEIN 38"/>
    <property type="match status" value="1"/>
</dbReference>
<dbReference type="PANTHER" id="PTHR16263:SF4">
    <property type="entry name" value="TETRATRICOPEPTIDE REPEAT PROTEIN 38"/>
    <property type="match status" value="1"/>
</dbReference>
<dbReference type="SUPFAM" id="SSF48452">
    <property type="entry name" value="TPR-like"/>
    <property type="match status" value="1"/>
</dbReference>
<organism>
    <name type="scientific">Homo sapiens</name>
    <name type="common">Human</name>
    <dbReference type="NCBI Taxonomy" id="9606"/>
    <lineage>
        <taxon>Eukaryota</taxon>
        <taxon>Metazoa</taxon>
        <taxon>Chordata</taxon>
        <taxon>Craniata</taxon>
        <taxon>Vertebrata</taxon>
        <taxon>Euteleostomi</taxon>
        <taxon>Mammalia</taxon>
        <taxon>Eutheria</taxon>
        <taxon>Euarchontoglires</taxon>
        <taxon>Primates</taxon>
        <taxon>Haplorrhini</taxon>
        <taxon>Catarrhini</taxon>
        <taxon>Hominidae</taxon>
        <taxon>Homo</taxon>
    </lineage>
</organism>
<proteinExistence type="evidence at protein level"/>
<evidence type="ECO:0000269" key="1">
    <source>
    </source>
</evidence>
<evidence type="ECO:0000269" key="2">
    <source>
    </source>
</evidence>
<evidence type="ECO:0000269" key="3">
    <source ref="3"/>
</evidence>
<evidence type="ECO:0000305" key="4"/>
<evidence type="ECO:0007744" key="5">
    <source>
    </source>
</evidence>
<sequence>MAAASPLRDCQAWKDARLPLSTTSNEACKLFDATLTQYVKWTNDKSLGGIEGCLSKLKAADPTFVMGHAMATGLVLIGTGSSVKLDKELDLAVKTMVEISRTQPLTRREQLHVSAVETFANGNFPKACELWEQILQDHPTDMLALKFSHDAYFYLGYQEQMRDSVARIYPFWTPDIPLSSYVKGIYSFGLMETNFYDQAEKLAKEALSINPTDAWSVHTVAHIHEMKAEIKDGLEFMQHSETFWKDSDMLACHNYWHWALYLIEKGEYEAALTIYDTHILPSLQANDAMLDVVDSCSMLYRLQMEGVSVGQRWQDVLPVARKHSRDHILLFNDAHFLMASLGAHDPQTTQELLTTLRDASESPGENCQHLLARDVGLPLCQALVEAEDGNPDRVLELLLPIRYRIVQLGGSNAQRDVFNQLLIHAALNCTSSVHKNVARSLLMERDALKPNSPLTERLIRKAATVHLMQ</sequence>
<keyword id="KW-0007">Acetylation</keyword>
<keyword id="KW-0597">Phosphoprotein</keyword>
<keyword id="KW-1267">Proteomics identification</keyword>
<keyword id="KW-1185">Reference proteome</keyword>
<keyword id="KW-0677">Repeat</keyword>
<keyword id="KW-0802">TPR repeat</keyword>
<protein>
    <recommendedName>
        <fullName>Tetratricopeptide repeat protein 38</fullName>
        <shortName>TPR repeat protein 38</shortName>
    </recommendedName>
</protein>
<reference key="1">
    <citation type="journal article" date="2004" name="Nat. Genet.">
        <title>Complete sequencing and characterization of 21,243 full-length human cDNAs.</title>
        <authorList>
            <person name="Ota T."/>
            <person name="Suzuki Y."/>
            <person name="Nishikawa T."/>
            <person name="Otsuki T."/>
            <person name="Sugiyama T."/>
            <person name="Irie R."/>
            <person name="Wakamatsu A."/>
            <person name="Hayashi K."/>
            <person name="Sato H."/>
            <person name="Nagai K."/>
            <person name="Kimura K."/>
            <person name="Makita H."/>
            <person name="Sekine M."/>
            <person name="Obayashi M."/>
            <person name="Nishi T."/>
            <person name="Shibahara T."/>
            <person name="Tanaka T."/>
            <person name="Ishii S."/>
            <person name="Yamamoto J."/>
            <person name="Saito K."/>
            <person name="Kawai Y."/>
            <person name="Isono Y."/>
            <person name="Nakamura Y."/>
            <person name="Nagahari K."/>
            <person name="Murakami K."/>
            <person name="Yasuda T."/>
            <person name="Iwayanagi T."/>
            <person name="Wagatsuma M."/>
            <person name="Shiratori A."/>
            <person name="Sudo H."/>
            <person name="Hosoiri T."/>
            <person name="Kaku Y."/>
            <person name="Kodaira H."/>
            <person name="Kondo H."/>
            <person name="Sugawara M."/>
            <person name="Takahashi M."/>
            <person name="Kanda K."/>
            <person name="Yokoi T."/>
            <person name="Furuya T."/>
            <person name="Kikkawa E."/>
            <person name="Omura Y."/>
            <person name="Abe K."/>
            <person name="Kamihara K."/>
            <person name="Katsuta N."/>
            <person name="Sato K."/>
            <person name="Tanikawa M."/>
            <person name="Yamazaki M."/>
            <person name="Ninomiya K."/>
            <person name="Ishibashi T."/>
            <person name="Yamashita H."/>
            <person name="Murakawa K."/>
            <person name="Fujimori K."/>
            <person name="Tanai H."/>
            <person name="Kimata M."/>
            <person name="Watanabe M."/>
            <person name="Hiraoka S."/>
            <person name="Chiba Y."/>
            <person name="Ishida S."/>
            <person name="Ono Y."/>
            <person name="Takiguchi S."/>
            <person name="Watanabe S."/>
            <person name="Yosida M."/>
            <person name="Hotuta T."/>
            <person name="Kusano J."/>
            <person name="Kanehori K."/>
            <person name="Takahashi-Fujii A."/>
            <person name="Hara H."/>
            <person name="Tanase T.-O."/>
            <person name="Nomura Y."/>
            <person name="Togiya S."/>
            <person name="Komai F."/>
            <person name="Hara R."/>
            <person name="Takeuchi K."/>
            <person name="Arita M."/>
            <person name="Imose N."/>
            <person name="Musashino K."/>
            <person name="Yuuki H."/>
            <person name="Oshima A."/>
            <person name="Sasaki N."/>
            <person name="Aotsuka S."/>
            <person name="Yoshikawa Y."/>
            <person name="Matsunawa H."/>
            <person name="Ichihara T."/>
            <person name="Shiohata N."/>
            <person name="Sano S."/>
            <person name="Moriya S."/>
            <person name="Momiyama H."/>
            <person name="Satoh N."/>
            <person name="Takami S."/>
            <person name="Terashima Y."/>
            <person name="Suzuki O."/>
            <person name="Nakagawa S."/>
            <person name="Senoh A."/>
            <person name="Mizoguchi H."/>
            <person name="Goto Y."/>
            <person name="Shimizu F."/>
            <person name="Wakebe H."/>
            <person name="Hishigaki H."/>
            <person name="Watanabe T."/>
            <person name="Sugiyama A."/>
            <person name="Takemoto M."/>
            <person name="Kawakami B."/>
            <person name="Yamazaki M."/>
            <person name="Watanabe K."/>
            <person name="Kumagai A."/>
            <person name="Itakura S."/>
            <person name="Fukuzumi Y."/>
            <person name="Fujimori Y."/>
            <person name="Komiyama M."/>
            <person name="Tashiro H."/>
            <person name="Tanigami A."/>
            <person name="Fujiwara T."/>
            <person name="Ono T."/>
            <person name="Yamada K."/>
            <person name="Fujii Y."/>
            <person name="Ozaki K."/>
            <person name="Hirao M."/>
            <person name="Ohmori Y."/>
            <person name="Kawabata A."/>
            <person name="Hikiji T."/>
            <person name="Kobatake N."/>
            <person name="Inagaki H."/>
            <person name="Ikema Y."/>
            <person name="Okamoto S."/>
            <person name="Okitani R."/>
            <person name="Kawakami T."/>
            <person name="Noguchi S."/>
            <person name="Itoh T."/>
            <person name="Shigeta K."/>
            <person name="Senba T."/>
            <person name="Matsumura K."/>
            <person name="Nakajima Y."/>
            <person name="Mizuno T."/>
            <person name="Morinaga M."/>
            <person name="Sasaki M."/>
            <person name="Togashi T."/>
            <person name="Oyama M."/>
            <person name="Hata H."/>
            <person name="Watanabe M."/>
            <person name="Komatsu T."/>
            <person name="Mizushima-Sugano J."/>
            <person name="Satoh T."/>
            <person name="Shirai Y."/>
            <person name="Takahashi Y."/>
            <person name="Nakagawa K."/>
            <person name="Okumura K."/>
            <person name="Nagase T."/>
            <person name="Nomura N."/>
            <person name="Kikuchi H."/>
            <person name="Masuho Y."/>
            <person name="Yamashita R."/>
            <person name="Nakai K."/>
            <person name="Yada T."/>
            <person name="Nakamura Y."/>
            <person name="Ohara O."/>
            <person name="Isogai T."/>
            <person name="Sugano S."/>
        </authorList>
    </citation>
    <scope>NUCLEOTIDE SEQUENCE [LARGE SCALE MRNA]</scope>
    <scope>VARIANT LEU-243</scope>
    <source>
        <tissue>Ileal mucosa</tissue>
    </source>
</reference>
<reference key="2">
    <citation type="journal article" date="1999" name="Nature">
        <title>The DNA sequence of human chromosome 22.</title>
        <authorList>
            <person name="Dunham I."/>
            <person name="Hunt A.R."/>
            <person name="Collins J.E."/>
            <person name="Bruskiewich R."/>
            <person name="Beare D.M."/>
            <person name="Clamp M."/>
            <person name="Smink L.J."/>
            <person name="Ainscough R."/>
            <person name="Almeida J.P."/>
            <person name="Babbage A.K."/>
            <person name="Bagguley C."/>
            <person name="Bailey J."/>
            <person name="Barlow K.F."/>
            <person name="Bates K.N."/>
            <person name="Beasley O.P."/>
            <person name="Bird C.P."/>
            <person name="Blakey S.E."/>
            <person name="Bridgeman A.M."/>
            <person name="Buck D."/>
            <person name="Burgess J."/>
            <person name="Burrill W.D."/>
            <person name="Burton J."/>
            <person name="Carder C."/>
            <person name="Carter N.P."/>
            <person name="Chen Y."/>
            <person name="Clark G."/>
            <person name="Clegg S.M."/>
            <person name="Cobley V.E."/>
            <person name="Cole C.G."/>
            <person name="Collier R.E."/>
            <person name="Connor R."/>
            <person name="Conroy D."/>
            <person name="Corby N.R."/>
            <person name="Coville G.J."/>
            <person name="Cox A.V."/>
            <person name="Davis J."/>
            <person name="Dawson E."/>
            <person name="Dhami P.D."/>
            <person name="Dockree C."/>
            <person name="Dodsworth S.J."/>
            <person name="Durbin R.M."/>
            <person name="Ellington A.G."/>
            <person name="Evans K.L."/>
            <person name="Fey J.M."/>
            <person name="Fleming K."/>
            <person name="French L."/>
            <person name="Garner A.A."/>
            <person name="Gilbert J.G.R."/>
            <person name="Goward M.E."/>
            <person name="Grafham D.V."/>
            <person name="Griffiths M.N.D."/>
            <person name="Hall C."/>
            <person name="Hall R.E."/>
            <person name="Hall-Tamlyn G."/>
            <person name="Heathcott R.W."/>
            <person name="Ho S."/>
            <person name="Holmes S."/>
            <person name="Hunt S.E."/>
            <person name="Jones M.C."/>
            <person name="Kershaw J."/>
            <person name="Kimberley A.M."/>
            <person name="King A."/>
            <person name="Laird G.K."/>
            <person name="Langford C.F."/>
            <person name="Leversha M.A."/>
            <person name="Lloyd C."/>
            <person name="Lloyd D.M."/>
            <person name="Martyn I.D."/>
            <person name="Mashreghi-Mohammadi M."/>
            <person name="Matthews L.H."/>
            <person name="Mccann O.T."/>
            <person name="Mcclay J."/>
            <person name="Mclaren S."/>
            <person name="McMurray A.A."/>
            <person name="Milne S.A."/>
            <person name="Mortimore B.J."/>
            <person name="Odell C.N."/>
            <person name="Pavitt R."/>
            <person name="Pearce A.V."/>
            <person name="Pearson D."/>
            <person name="Phillimore B.J.C.T."/>
            <person name="Phillips S.H."/>
            <person name="Plumb R.W."/>
            <person name="Ramsay H."/>
            <person name="Ramsey Y."/>
            <person name="Rogers L."/>
            <person name="Ross M.T."/>
            <person name="Scott C.E."/>
            <person name="Sehra H.K."/>
            <person name="Skuce C.D."/>
            <person name="Smalley S."/>
            <person name="Smith M.L."/>
            <person name="Soderlund C."/>
            <person name="Spragon L."/>
            <person name="Steward C.A."/>
            <person name="Sulston J.E."/>
            <person name="Swann R.M."/>
            <person name="Vaudin M."/>
            <person name="Wall M."/>
            <person name="Wallis J.M."/>
            <person name="Whiteley M.N."/>
            <person name="Willey D.L."/>
            <person name="Williams L."/>
            <person name="Williams S.A."/>
            <person name="Williamson H."/>
            <person name="Wilmer T.E."/>
            <person name="Wilming L."/>
            <person name="Wright C.L."/>
            <person name="Hubbard T."/>
            <person name="Bentley D.R."/>
            <person name="Beck S."/>
            <person name="Rogers J."/>
            <person name="Shimizu N."/>
            <person name="Minoshima S."/>
            <person name="Kawasaki K."/>
            <person name="Sasaki T."/>
            <person name="Asakawa S."/>
            <person name="Kudoh J."/>
            <person name="Shintani A."/>
            <person name="Shibuya K."/>
            <person name="Yoshizaki Y."/>
            <person name="Aoki N."/>
            <person name="Mitsuyama S."/>
            <person name="Roe B.A."/>
            <person name="Chen F."/>
            <person name="Chu L."/>
            <person name="Crabtree J."/>
            <person name="Deschamps S."/>
            <person name="Do A."/>
            <person name="Do T."/>
            <person name="Dorman A."/>
            <person name="Fang F."/>
            <person name="Fu Y."/>
            <person name="Hu P."/>
            <person name="Hua A."/>
            <person name="Kenton S."/>
            <person name="Lai H."/>
            <person name="Lao H.I."/>
            <person name="Lewis J."/>
            <person name="Lewis S."/>
            <person name="Lin S.-P."/>
            <person name="Loh P."/>
            <person name="Malaj E."/>
            <person name="Nguyen T."/>
            <person name="Pan H."/>
            <person name="Phan S."/>
            <person name="Qi S."/>
            <person name="Qian Y."/>
            <person name="Ray L."/>
            <person name="Ren Q."/>
            <person name="Shaull S."/>
            <person name="Sloan D."/>
            <person name="Song L."/>
            <person name="Wang Q."/>
            <person name="Wang Y."/>
            <person name="Wang Z."/>
            <person name="White J."/>
            <person name="Willingham D."/>
            <person name="Wu H."/>
            <person name="Yao Z."/>
            <person name="Zhan M."/>
            <person name="Zhang G."/>
            <person name="Chissoe S."/>
            <person name="Murray J."/>
            <person name="Miller N."/>
            <person name="Minx P."/>
            <person name="Fulton R."/>
            <person name="Johnson D."/>
            <person name="Bemis G."/>
            <person name="Bentley D."/>
            <person name="Bradshaw H."/>
            <person name="Bourne S."/>
            <person name="Cordes M."/>
            <person name="Du Z."/>
            <person name="Fulton L."/>
            <person name="Goela D."/>
            <person name="Graves T."/>
            <person name="Hawkins J."/>
            <person name="Hinds K."/>
            <person name="Kemp K."/>
            <person name="Latreille P."/>
            <person name="Layman D."/>
            <person name="Ozersky P."/>
            <person name="Rohlfing T."/>
            <person name="Scheet P."/>
            <person name="Walker C."/>
            <person name="Wamsley A."/>
            <person name="Wohldmann P."/>
            <person name="Pepin K."/>
            <person name="Nelson J."/>
            <person name="Korf I."/>
            <person name="Bedell J.A."/>
            <person name="Hillier L.W."/>
            <person name="Mardis E."/>
            <person name="Waterston R."/>
            <person name="Wilson R."/>
            <person name="Emanuel B.S."/>
            <person name="Shaikh T."/>
            <person name="Kurahashi H."/>
            <person name="Saitta S."/>
            <person name="Budarf M.L."/>
            <person name="McDermid H.E."/>
            <person name="Johnson A."/>
            <person name="Wong A.C.C."/>
            <person name="Morrow B.E."/>
            <person name="Edelmann L."/>
            <person name="Kim U.J."/>
            <person name="Shizuya H."/>
            <person name="Simon M.I."/>
            <person name="Dumanski J.P."/>
            <person name="Peyrard M."/>
            <person name="Kedra D."/>
            <person name="Seroussi E."/>
            <person name="Fransson I."/>
            <person name="Tapia I."/>
            <person name="Bruder C.E."/>
            <person name="O'Brien K.P."/>
            <person name="Wilkinson P."/>
            <person name="Bodenteich A."/>
            <person name="Hartman K."/>
            <person name="Hu X."/>
            <person name="Khan A.S."/>
            <person name="Lane L."/>
            <person name="Tilahun Y."/>
            <person name="Wright H."/>
        </authorList>
    </citation>
    <scope>NUCLEOTIDE SEQUENCE [LARGE SCALE GENOMIC DNA]</scope>
</reference>
<reference key="3">
    <citation type="submission" date="2005-07" db="EMBL/GenBank/DDBJ databases">
        <authorList>
            <person name="Mural R.J."/>
            <person name="Istrail S."/>
            <person name="Sutton G.G."/>
            <person name="Florea L."/>
            <person name="Halpern A.L."/>
            <person name="Mobarry C.M."/>
            <person name="Lippert R."/>
            <person name="Walenz B."/>
            <person name="Shatkay H."/>
            <person name="Dew I."/>
            <person name="Miller J.R."/>
            <person name="Flanigan M.J."/>
            <person name="Edwards N.J."/>
            <person name="Bolanos R."/>
            <person name="Fasulo D."/>
            <person name="Halldorsson B.V."/>
            <person name="Hannenhalli S."/>
            <person name="Turner R."/>
            <person name="Yooseph S."/>
            <person name="Lu F."/>
            <person name="Nusskern D.R."/>
            <person name="Shue B.C."/>
            <person name="Zheng X.H."/>
            <person name="Zhong F."/>
            <person name="Delcher A.L."/>
            <person name="Huson D.H."/>
            <person name="Kravitz S.A."/>
            <person name="Mouchard L."/>
            <person name="Reinert K."/>
            <person name="Remington K.A."/>
            <person name="Clark A.G."/>
            <person name="Waterman M.S."/>
            <person name="Eichler E.E."/>
            <person name="Adams M.D."/>
            <person name="Hunkapiller M.W."/>
            <person name="Myers E.W."/>
            <person name="Venter J.C."/>
        </authorList>
    </citation>
    <scope>NUCLEOTIDE SEQUENCE [LARGE SCALE GENOMIC DNA]</scope>
    <scope>VARIANT LEU-243</scope>
</reference>
<reference key="4">
    <citation type="journal article" date="2004" name="Genome Res.">
        <title>The status, quality, and expansion of the NIH full-length cDNA project: the Mammalian Gene Collection (MGC).</title>
        <authorList>
            <consortium name="The MGC Project Team"/>
        </authorList>
    </citation>
    <scope>NUCLEOTIDE SEQUENCE [LARGE SCALE MRNA]</scope>
    <scope>VARIANT LEU-243</scope>
    <source>
        <tissue>Brain</tissue>
    </source>
</reference>
<reference key="5">
    <citation type="journal article" date="2010" name="Sci. Signal.">
        <title>Quantitative phosphoproteomics reveals widespread full phosphorylation site occupancy during mitosis.</title>
        <authorList>
            <person name="Olsen J.V."/>
            <person name="Vermeulen M."/>
            <person name="Santamaria A."/>
            <person name="Kumar C."/>
            <person name="Miller M.L."/>
            <person name="Jensen L.J."/>
            <person name="Gnad F."/>
            <person name="Cox J."/>
            <person name="Jensen T.S."/>
            <person name="Nigg E.A."/>
            <person name="Brunak S."/>
            <person name="Mann M."/>
        </authorList>
    </citation>
    <scope>ACETYLATION [LARGE SCALE ANALYSIS] AT ALA-2</scope>
    <scope>PHOSPHORYLATION [LARGE SCALE ANALYSIS] AT SER-5</scope>
    <scope>CLEAVAGE OF INITIATOR METHIONINE [LARGE SCALE ANALYSIS]</scope>
    <scope>IDENTIFICATION BY MASS SPECTROMETRY [LARGE SCALE ANALYSIS]</scope>
    <source>
        <tissue>Cervix carcinoma</tissue>
    </source>
</reference>
<reference key="6">
    <citation type="journal article" date="2011" name="BMC Syst. Biol.">
        <title>Initial characterization of the human central proteome.</title>
        <authorList>
            <person name="Burkard T.R."/>
            <person name="Planyavsky M."/>
            <person name="Kaupe I."/>
            <person name="Breitwieser F.P."/>
            <person name="Buerckstuemmer T."/>
            <person name="Bennett K.L."/>
            <person name="Superti-Furga G."/>
            <person name="Colinge J."/>
        </authorList>
    </citation>
    <scope>IDENTIFICATION BY MASS SPECTROMETRY [LARGE SCALE ANALYSIS]</scope>
</reference>
<reference key="7">
    <citation type="journal article" date="2014" name="J. Proteomics">
        <title>An enzyme assisted RP-RPLC approach for in-depth analysis of human liver phosphoproteome.</title>
        <authorList>
            <person name="Bian Y."/>
            <person name="Song C."/>
            <person name="Cheng K."/>
            <person name="Dong M."/>
            <person name="Wang F."/>
            <person name="Huang J."/>
            <person name="Sun D."/>
            <person name="Wang L."/>
            <person name="Ye M."/>
            <person name="Zou H."/>
        </authorList>
    </citation>
    <scope>IDENTIFICATION BY MASS SPECTROMETRY [LARGE SCALE ANALYSIS]</scope>
    <source>
        <tissue>Liver</tissue>
    </source>
</reference>
<feature type="initiator methionine" description="Removed" evidence="5">
    <location>
        <position position="1"/>
    </location>
</feature>
<feature type="chain" id="PRO_0000321530" description="Tetratricopeptide repeat protein 38">
    <location>
        <begin position="2"/>
        <end position="469"/>
    </location>
</feature>
<feature type="repeat" description="TPR 1">
    <location>
        <begin position="108"/>
        <end position="141"/>
    </location>
</feature>
<feature type="repeat" description="TPR 2">
    <location>
        <begin position="180"/>
        <end position="213"/>
    </location>
</feature>
<feature type="repeat" description="TPR 3">
    <location>
        <begin position="252"/>
        <end position="285"/>
    </location>
</feature>
<feature type="modified residue" description="N-acetylalanine" evidence="5">
    <location>
        <position position="2"/>
    </location>
</feature>
<feature type="modified residue" description="Phosphoserine" evidence="5">
    <location>
        <position position="5"/>
    </location>
</feature>
<feature type="sequence variant" id="VAR_039344" description="In dbSNP:rs130642." evidence="1 2 3">
    <original>F</original>
    <variation>L</variation>
    <location>
        <position position="243"/>
    </location>
</feature>